<sequence length="512" mass="58333">MTINASNIENSFSKINSHFSKLTDYIWPIKRNEISKFLFITLLMFCILFIQNLIRALKDSIVTTMIGAETISFLKFWGVMPSAFLITVMYVKLVNRMKAENIFYLIISIFLIFFALFAYVIFPNHEILHLRPVTVHNLTTSLPNLKWFILLLSKWSFSLFYIIAELWPNVVFALLFWQFVNNITTVEESKRFYPLFGLLSQTGIYLAGHFLENLSKINYYITDKFALQSSFHTLSIQIILTIVLILGIVSIKTFWLLNHKVLDKKHMSLLRFKTKNKSITIAKSFQMILSSRHIRLIATLLICYGIAINLVEGPWKAAATKIYKTPTEYAAFIGSYLSYTGVFTIFFVLLGSNIVRRIGWFTSAVITPSIVFITGILFFAFNNFEGFAGLIIANFILTDPALVAITIGAIQNVLSKSSKYTLFDSTKEMAYVPLEPEIKISGKAAADVIGTKLGKSGSAFLQSLIFIILPSSSYQSISICLMIIFILTCLTWIWATKELNKEYKNSIKFSQK</sequence>
<dbReference type="EMBL" id="AJ507310">
    <property type="protein sequence ID" value="CAD45263.1"/>
    <property type="molecule type" value="Genomic_DNA"/>
</dbReference>
<dbReference type="EMBL" id="AE017197">
    <property type="protein sequence ID" value="AAU03958.1"/>
    <property type="molecule type" value="Genomic_DNA"/>
</dbReference>
<dbReference type="RefSeq" id="WP_011190940.1">
    <property type="nucleotide sequence ID" value="NC_006142.1"/>
</dbReference>
<dbReference type="KEGG" id="rty:RT0486"/>
<dbReference type="eggNOG" id="COG3202">
    <property type="taxonomic scope" value="Bacteria"/>
</dbReference>
<dbReference type="HOGENOM" id="CLU_023964_0_1_5"/>
<dbReference type="OrthoDB" id="19786at2"/>
<dbReference type="Proteomes" id="UP000000604">
    <property type="component" value="Chromosome"/>
</dbReference>
<dbReference type="GO" id="GO:0005886">
    <property type="term" value="C:plasma membrane"/>
    <property type="evidence" value="ECO:0007669"/>
    <property type="project" value="UniProtKB-SubCell"/>
</dbReference>
<dbReference type="GO" id="GO:0005524">
    <property type="term" value="F:ATP binding"/>
    <property type="evidence" value="ECO:0007669"/>
    <property type="project" value="UniProtKB-KW"/>
</dbReference>
<dbReference type="GO" id="GO:0005471">
    <property type="term" value="F:ATP:ADP antiporter activity"/>
    <property type="evidence" value="ECO:0007669"/>
    <property type="project" value="InterPro"/>
</dbReference>
<dbReference type="InterPro" id="IPR004667">
    <property type="entry name" value="ADP_ATP_car_bac_type"/>
</dbReference>
<dbReference type="NCBIfam" id="TIGR00769">
    <property type="entry name" value="AAA"/>
    <property type="match status" value="1"/>
</dbReference>
<dbReference type="PANTHER" id="PTHR31187">
    <property type="match status" value="1"/>
</dbReference>
<dbReference type="PANTHER" id="PTHR31187:SF1">
    <property type="entry name" value="ADP,ATP CARRIER PROTEIN 1"/>
    <property type="match status" value="1"/>
</dbReference>
<dbReference type="Pfam" id="PF03219">
    <property type="entry name" value="TLC"/>
    <property type="match status" value="1"/>
</dbReference>
<keyword id="KW-0067">ATP-binding</keyword>
<keyword id="KW-1003">Cell membrane</keyword>
<keyword id="KW-0472">Membrane</keyword>
<keyword id="KW-0547">Nucleotide-binding</keyword>
<keyword id="KW-0812">Transmembrane</keyword>
<keyword id="KW-1133">Transmembrane helix</keyword>
<keyword id="KW-0813">Transport</keyword>
<comment type="function">
    <text evidence="1">Provides the rickettsial cell with host ATP in exchange for rickettsial ADP. This is an obligate exchange system. This energy acquiring activity is an important component of rickettsial parasitism (By similarity).</text>
</comment>
<comment type="subcellular location">
    <subcellularLocation>
        <location>Cell membrane</location>
        <topology>Multi-pass membrane protein</topology>
    </subcellularLocation>
</comment>
<comment type="similarity">
    <text evidence="3">Belongs to the ADP/ATP translocase tlc family.</text>
</comment>
<gene>
    <name type="primary">tlcD</name>
    <name type="synonym">tlc4</name>
    <name type="ordered locus">RT0486</name>
</gene>
<organism>
    <name type="scientific">Rickettsia typhi (strain ATCC VR-144 / Wilmington)</name>
    <dbReference type="NCBI Taxonomy" id="257363"/>
    <lineage>
        <taxon>Bacteria</taxon>
        <taxon>Pseudomonadati</taxon>
        <taxon>Pseudomonadota</taxon>
        <taxon>Alphaproteobacteria</taxon>
        <taxon>Rickettsiales</taxon>
        <taxon>Rickettsiaceae</taxon>
        <taxon>Rickettsieae</taxon>
        <taxon>Rickettsia</taxon>
        <taxon>typhus group</taxon>
    </lineage>
</organism>
<proteinExistence type="inferred from homology"/>
<feature type="chain" id="PRO_0000286477" description="ADP,ATP carrier protein 4">
    <location>
        <begin position="1"/>
        <end position="512"/>
    </location>
</feature>
<feature type="transmembrane region" description="Helical" evidence="2">
    <location>
        <begin position="34"/>
        <end position="54"/>
    </location>
</feature>
<feature type="transmembrane region" description="Helical" evidence="2">
    <location>
        <begin position="71"/>
        <end position="91"/>
    </location>
</feature>
<feature type="transmembrane region" description="Helical" evidence="2">
    <location>
        <begin position="102"/>
        <end position="122"/>
    </location>
</feature>
<feature type="transmembrane region" description="Helical" evidence="2">
    <location>
        <begin position="157"/>
        <end position="177"/>
    </location>
</feature>
<feature type="transmembrane region" description="Helical" evidence="2">
    <location>
        <begin position="192"/>
        <end position="212"/>
    </location>
</feature>
<feature type="transmembrane region" description="Helical" evidence="2">
    <location>
        <begin position="231"/>
        <end position="251"/>
    </location>
</feature>
<feature type="transmembrane region" description="Helical" evidence="2">
    <location>
        <begin position="296"/>
        <end position="316"/>
    </location>
</feature>
<feature type="transmembrane region" description="Helical" evidence="2">
    <location>
        <begin position="330"/>
        <end position="350"/>
    </location>
</feature>
<feature type="transmembrane region" description="Helical" evidence="2">
    <location>
        <begin position="361"/>
        <end position="381"/>
    </location>
</feature>
<feature type="transmembrane region" description="Helical" evidence="2">
    <location>
        <begin position="390"/>
        <end position="410"/>
    </location>
</feature>
<feature type="transmembrane region" description="Helical" evidence="2">
    <location>
        <begin position="448"/>
        <end position="468"/>
    </location>
</feature>
<feature type="transmembrane region" description="Helical" evidence="2">
    <location>
        <begin position="476"/>
        <end position="496"/>
    </location>
</feature>
<protein>
    <recommendedName>
        <fullName>ADP,ATP carrier protein 4</fullName>
    </recommendedName>
    <alternativeName>
        <fullName>ADP/ATP translocase 4</fullName>
    </alternativeName>
</protein>
<evidence type="ECO:0000250" key="1"/>
<evidence type="ECO:0000255" key="2"/>
<evidence type="ECO:0000305" key="3"/>
<reference key="1">
    <citation type="journal article" date="2003" name="J. Mol. Evol.">
        <title>Deep origin of plastid/parasite ATP/ADP translocases.</title>
        <authorList>
            <person name="Amiri H."/>
            <person name="Karlberg O."/>
            <person name="Andersson S.G."/>
        </authorList>
    </citation>
    <scope>NUCLEOTIDE SEQUENCE [GENOMIC DNA]</scope>
    <source>
        <strain>ATCC VR-144 / Wilmington</strain>
    </source>
</reference>
<reference key="2">
    <citation type="journal article" date="2004" name="J. Bacteriol.">
        <title>Complete genome sequence of Rickettsia typhi and comparison with sequences of other Rickettsiae.</title>
        <authorList>
            <person name="McLeod M.P."/>
            <person name="Qin X."/>
            <person name="Karpathy S.E."/>
            <person name="Gioia J."/>
            <person name="Highlander S.K."/>
            <person name="Fox G.E."/>
            <person name="McNeill T.Z."/>
            <person name="Jiang H."/>
            <person name="Muzny D."/>
            <person name="Jacob L.S."/>
            <person name="Hawes A.C."/>
            <person name="Sodergren E."/>
            <person name="Gill R."/>
            <person name="Hume J."/>
            <person name="Morgan M."/>
            <person name="Fan G."/>
            <person name="Amin A.G."/>
            <person name="Gibbs R.A."/>
            <person name="Hong C."/>
            <person name="Yu X.-J."/>
            <person name="Walker D.H."/>
            <person name="Weinstock G.M."/>
        </authorList>
    </citation>
    <scope>NUCLEOTIDE SEQUENCE [LARGE SCALE GENOMIC DNA]</scope>
    <source>
        <strain>ATCC VR-144 / Wilmington</strain>
    </source>
</reference>
<accession>Q83W27</accession>
<name>TLCD_RICTY</name>